<sequence>MDDDEFVFIESNPTQSTWVDVKKSQQQQQQQPQAPPQQQQQQILPVYRNLNPLVDENDGFTYQQQQLYLQQQQQFCQQQLLLEQQQQQQLLLKQQQQQLLLEQQQQQLLLKQQKQQLLLEQQLLLEQRQQQQQKVPIPIAQVPASTLVVESKQEEKIQEEQEVPVIVSIINSPPPPQEEEKPQLSKKEEPEWLKGKDKAPYISTSTSDVKYTSNVVSNKPYTTIKSSTSYSSVSGSGGSGIRRISLAELNGNSKPYTSSNATNKPFTTASKSTNSYSFSF</sequence>
<organism>
    <name type="scientific">Dictyostelium discoideum</name>
    <name type="common">Social amoeba</name>
    <dbReference type="NCBI Taxonomy" id="44689"/>
    <lineage>
        <taxon>Eukaryota</taxon>
        <taxon>Amoebozoa</taxon>
        <taxon>Evosea</taxon>
        <taxon>Eumycetozoa</taxon>
        <taxon>Dictyostelia</taxon>
        <taxon>Dictyosteliales</taxon>
        <taxon>Dictyosteliaceae</taxon>
        <taxon>Dictyostelium</taxon>
    </lineage>
</organism>
<protein>
    <recommendedName>
        <fullName>Uncharacterized protein DDB_G0286393</fullName>
    </recommendedName>
</protein>
<proteinExistence type="predicted"/>
<evidence type="ECO:0000256" key="1">
    <source>
        <dbReference type="SAM" id="MobiDB-lite"/>
    </source>
</evidence>
<keyword id="KW-1185">Reference proteome</keyword>
<dbReference type="EMBL" id="AAFI02000085">
    <property type="protein sequence ID" value="EAL64221.1"/>
    <property type="molecule type" value="Genomic_DNA"/>
</dbReference>
<dbReference type="RefSeq" id="XP_637724.1">
    <property type="nucleotide sequence ID" value="XM_632632.1"/>
</dbReference>
<dbReference type="STRING" id="44689.Q54LV6"/>
<dbReference type="PaxDb" id="44689-DDB0305138"/>
<dbReference type="EnsemblProtists" id="EAL64221">
    <property type="protein sequence ID" value="EAL64221"/>
    <property type="gene ID" value="DDB_G0286393"/>
</dbReference>
<dbReference type="GeneID" id="8625589"/>
<dbReference type="KEGG" id="ddi:DDB_G0286393"/>
<dbReference type="dictyBase" id="DDB_G0286393"/>
<dbReference type="VEuPathDB" id="AmoebaDB:DDB_G0286393"/>
<dbReference type="eggNOG" id="ENOG502RIII">
    <property type="taxonomic scope" value="Eukaryota"/>
</dbReference>
<dbReference type="HOGENOM" id="CLU_995457_0_0_1"/>
<dbReference type="InParanoid" id="Q54LV6"/>
<dbReference type="OMA" id="NIVVIQF"/>
<dbReference type="PRO" id="PR:Q54LV6"/>
<dbReference type="Proteomes" id="UP000002195">
    <property type="component" value="Chromosome 4"/>
</dbReference>
<accession>Q54LV6</accession>
<reference key="1">
    <citation type="journal article" date="2005" name="Nature">
        <title>The genome of the social amoeba Dictyostelium discoideum.</title>
        <authorList>
            <person name="Eichinger L."/>
            <person name="Pachebat J.A."/>
            <person name="Gloeckner G."/>
            <person name="Rajandream M.A."/>
            <person name="Sucgang R."/>
            <person name="Berriman M."/>
            <person name="Song J."/>
            <person name="Olsen R."/>
            <person name="Szafranski K."/>
            <person name="Xu Q."/>
            <person name="Tunggal B."/>
            <person name="Kummerfeld S."/>
            <person name="Madera M."/>
            <person name="Konfortov B.A."/>
            <person name="Rivero F."/>
            <person name="Bankier A.T."/>
            <person name="Lehmann R."/>
            <person name="Hamlin N."/>
            <person name="Davies R."/>
            <person name="Gaudet P."/>
            <person name="Fey P."/>
            <person name="Pilcher K."/>
            <person name="Chen G."/>
            <person name="Saunders D."/>
            <person name="Sodergren E.J."/>
            <person name="Davis P."/>
            <person name="Kerhornou A."/>
            <person name="Nie X."/>
            <person name="Hall N."/>
            <person name="Anjard C."/>
            <person name="Hemphill L."/>
            <person name="Bason N."/>
            <person name="Farbrother P."/>
            <person name="Desany B."/>
            <person name="Just E."/>
            <person name="Morio T."/>
            <person name="Rost R."/>
            <person name="Churcher C.M."/>
            <person name="Cooper J."/>
            <person name="Haydock S."/>
            <person name="van Driessche N."/>
            <person name="Cronin A."/>
            <person name="Goodhead I."/>
            <person name="Muzny D.M."/>
            <person name="Mourier T."/>
            <person name="Pain A."/>
            <person name="Lu M."/>
            <person name="Harper D."/>
            <person name="Lindsay R."/>
            <person name="Hauser H."/>
            <person name="James K.D."/>
            <person name="Quiles M."/>
            <person name="Madan Babu M."/>
            <person name="Saito T."/>
            <person name="Buchrieser C."/>
            <person name="Wardroper A."/>
            <person name="Felder M."/>
            <person name="Thangavelu M."/>
            <person name="Johnson D."/>
            <person name="Knights A."/>
            <person name="Loulseged H."/>
            <person name="Mungall K.L."/>
            <person name="Oliver K."/>
            <person name="Price C."/>
            <person name="Quail M.A."/>
            <person name="Urushihara H."/>
            <person name="Hernandez J."/>
            <person name="Rabbinowitsch E."/>
            <person name="Steffen D."/>
            <person name="Sanders M."/>
            <person name="Ma J."/>
            <person name="Kohara Y."/>
            <person name="Sharp S."/>
            <person name="Simmonds M.N."/>
            <person name="Spiegler S."/>
            <person name="Tivey A."/>
            <person name="Sugano S."/>
            <person name="White B."/>
            <person name="Walker D."/>
            <person name="Woodward J.R."/>
            <person name="Winckler T."/>
            <person name="Tanaka Y."/>
            <person name="Shaulsky G."/>
            <person name="Schleicher M."/>
            <person name="Weinstock G.M."/>
            <person name="Rosenthal A."/>
            <person name="Cox E.C."/>
            <person name="Chisholm R.L."/>
            <person name="Gibbs R.A."/>
            <person name="Loomis W.F."/>
            <person name="Platzer M."/>
            <person name="Kay R.R."/>
            <person name="Williams J.G."/>
            <person name="Dear P.H."/>
            <person name="Noegel A.A."/>
            <person name="Barrell B.G."/>
            <person name="Kuspa A."/>
        </authorList>
    </citation>
    <scope>NUCLEOTIDE SEQUENCE [LARGE SCALE GENOMIC DNA]</scope>
    <source>
        <strain>AX4</strain>
    </source>
</reference>
<feature type="chain" id="PRO_0000348507" description="Uncharacterized protein DDB_G0286393">
    <location>
        <begin position="1"/>
        <end position="280"/>
    </location>
</feature>
<feature type="region of interest" description="Disordered" evidence="1">
    <location>
        <begin position="20"/>
        <end position="41"/>
    </location>
</feature>
<feature type="region of interest" description="Disordered" evidence="1">
    <location>
        <begin position="170"/>
        <end position="199"/>
    </location>
</feature>
<feature type="region of interest" description="Disordered" evidence="1">
    <location>
        <begin position="251"/>
        <end position="280"/>
    </location>
</feature>
<feature type="compositionally biased region" description="Low complexity" evidence="1">
    <location>
        <begin position="25"/>
        <end position="41"/>
    </location>
</feature>
<feature type="compositionally biased region" description="Basic and acidic residues" evidence="1">
    <location>
        <begin position="178"/>
        <end position="199"/>
    </location>
</feature>
<name>Y6946_DICDI</name>
<gene>
    <name type="ORF">DDB_G0286393</name>
</gene>